<feature type="chain" id="PRO_0000163470" description="Large ribosomal subunit protein bL19">
    <location>
        <begin position="1"/>
        <end position="118"/>
    </location>
</feature>
<dbReference type="EMBL" id="AL935263">
    <property type="protein sequence ID" value="CCC78951.1"/>
    <property type="molecule type" value="Genomic_DNA"/>
</dbReference>
<dbReference type="RefSeq" id="WP_003640385.1">
    <property type="nucleotide sequence ID" value="NC_004567.2"/>
</dbReference>
<dbReference type="RefSeq" id="YP_004889465.1">
    <property type="nucleotide sequence ID" value="NC_004567.2"/>
</dbReference>
<dbReference type="SMR" id="Q88WJ1"/>
<dbReference type="STRING" id="220668.lp_1640"/>
<dbReference type="EnsemblBacteria" id="CCC78951">
    <property type="protein sequence ID" value="CCC78951"/>
    <property type="gene ID" value="lp_1640"/>
</dbReference>
<dbReference type="GeneID" id="89669020"/>
<dbReference type="KEGG" id="lpl:lp_1640"/>
<dbReference type="PATRIC" id="fig|220668.9.peg.1387"/>
<dbReference type="eggNOG" id="COG0335">
    <property type="taxonomic scope" value="Bacteria"/>
</dbReference>
<dbReference type="HOGENOM" id="CLU_103507_2_1_9"/>
<dbReference type="OrthoDB" id="9803541at2"/>
<dbReference type="PhylomeDB" id="Q88WJ1"/>
<dbReference type="Proteomes" id="UP000000432">
    <property type="component" value="Chromosome"/>
</dbReference>
<dbReference type="GO" id="GO:0022625">
    <property type="term" value="C:cytosolic large ribosomal subunit"/>
    <property type="evidence" value="ECO:0007669"/>
    <property type="project" value="TreeGrafter"/>
</dbReference>
<dbReference type="GO" id="GO:0003735">
    <property type="term" value="F:structural constituent of ribosome"/>
    <property type="evidence" value="ECO:0007669"/>
    <property type="project" value="InterPro"/>
</dbReference>
<dbReference type="GO" id="GO:0006412">
    <property type="term" value="P:translation"/>
    <property type="evidence" value="ECO:0007669"/>
    <property type="project" value="UniProtKB-UniRule"/>
</dbReference>
<dbReference type="FunFam" id="2.30.30.790:FF:000001">
    <property type="entry name" value="50S ribosomal protein L19"/>
    <property type="match status" value="1"/>
</dbReference>
<dbReference type="Gene3D" id="2.30.30.790">
    <property type="match status" value="1"/>
</dbReference>
<dbReference type="HAMAP" id="MF_00402">
    <property type="entry name" value="Ribosomal_bL19"/>
    <property type="match status" value="1"/>
</dbReference>
<dbReference type="InterPro" id="IPR001857">
    <property type="entry name" value="Ribosomal_bL19"/>
</dbReference>
<dbReference type="InterPro" id="IPR018257">
    <property type="entry name" value="Ribosomal_bL19_CS"/>
</dbReference>
<dbReference type="InterPro" id="IPR038657">
    <property type="entry name" value="Ribosomal_bL19_sf"/>
</dbReference>
<dbReference type="InterPro" id="IPR008991">
    <property type="entry name" value="Translation_prot_SH3-like_sf"/>
</dbReference>
<dbReference type="NCBIfam" id="TIGR01024">
    <property type="entry name" value="rplS_bact"/>
    <property type="match status" value="1"/>
</dbReference>
<dbReference type="PANTHER" id="PTHR15680:SF9">
    <property type="entry name" value="LARGE RIBOSOMAL SUBUNIT PROTEIN BL19M"/>
    <property type="match status" value="1"/>
</dbReference>
<dbReference type="PANTHER" id="PTHR15680">
    <property type="entry name" value="RIBOSOMAL PROTEIN L19"/>
    <property type="match status" value="1"/>
</dbReference>
<dbReference type="Pfam" id="PF01245">
    <property type="entry name" value="Ribosomal_L19"/>
    <property type="match status" value="1"/>
</dbReference>
<dbReference type="PIRSF" id="PIRSF002191">
    <property type="entry name" value="Ribosomal_L19"/>
    <property type="match status" value="1"/>
</dbReference>
<dbReference type="PRINTS" id="PR00061">
    <property type="entry name" value="RIBOSOMALL19"/>
</dbReference>
<dbReference type="SUPFAM" id="SSF50104">
    <property type="entry name" value="Translation proteins SH3-like domain"/>
    <property type="match status" value="1"/>
</dbReference>
<dbReference type="PROSITE" id="PS01015">
    <property type="entry name" value="RIBOSOMAL_L19"/>
    <property type="match status" value="1"/>
</dbReference>
<name>RL19_LACPL</name>
<proteinExistence type="inferred from homology"/>
<accession>Q88WJ1</accession>
<accession>F9UP12</accession>
<sequence length="118" mass="13610">MRQNQLIEKITNEQLRTDIPDFRAGDTVRVHARVVEGTRERIQLFEGVVIKRHGSGISETYTVRKISNGVGVERTFPLHTPRVAAIDVVRQGRVRRAKLYYLRNLHGKAARIPERRRG</sequence>
<reference key="1">
    <citation type="journal article" date="2003" name="Proc. Natl. Acad. Sci. U.S.A.">
        <title>Complete genome sequence of Lactobacillus plantarum WCFS1.</title>
        <authorList>
            <person name="Kleerebezem M."/>
            <person name="Boekhorst J."/>
            <person name="van Kranenburg R."/>
            <person name="Molenaar D."/>
            <person name="Kuipers O.P."/>
            <person name="Leer R."/>
            <person name="Tarchini R."/>
            <person name="Peters S.A."/>
            <person name="Sandbrink H.M."/>
            <person name="Fiers M.W.E.J."/>
            <person name="Stiekema W."/>
            <person name="Klein Lankhorst R.M."/>
            <person name="Bron P.A."/>
            <person name="Hoffer S.M."/>
            <person name="Nierop Groot M.N."/>
            <person name="Kerkhoven R."/>
            <person name="De Vries M."/>
            <person name="Ursing B."/>
            <person name="De Vos W.M."/>
            <person name="Siezen R.J."/>
        </authorList>
    </citation>
    <scope>NUCLEOTIDE SEQUENCE [LARGE SCALE GENOMIC DNA]</scope>
    <source>
        <strain>ATCC BAA-793 / NCIMB 8826 / WCFS1</strain>
    </source>
</reference>
<reference key="2">
    <citation type="journal article" date="2012" name="J. Bacteriol.">
        <title>Complete resequencing and reannotation of the Lactobacillus plantarum WCFS1 genome.</title>
        <authorList>
            <person name="Siezen R.J."/>
            <person name="Francke C."/>
            <person name="Renckens B."/>
            <person name="Boekhorst J."/>
            <person name="Wels M."/>
            <person name="Kleerebezem M."/>
            <person name="van Hijum S.A."/>
        </authorList>
    </citation>
    <scope>NUCLEOTIDE SEQUENCE [LARGE SCALE GENOMIC DNA]</scope>
    <scope>GENOME REANNOTATION</scope>
    <source>
        <strain>ATCC BAA-793 / NCIMB 8826 / WCFS1</strain>
    </source>
</reference>
<protein>
    <recommendedName>
        <fullName evidence="1">Large ribosomal subunit protein bL19</fullName>
    </recommendedName>
    <alternativeName>
        <fullName evidence="2">50S ribosomal protein L19</fullName>
    </alternativeName>
</protein>
<keyword id="KW-1185">Reference proteome</keyword>
<keyword id="KW-0687">Ribonucleoprotein</keyword>
<keyword id="KW-0689">Ribosomal protein</keyword>
<comment type="function">
    <text evidence="1">This protein is located at the 30S-50S ribosomal subunit interface and may play a role in the structure and function of the aminoacyl-tRNA binding site.</text>
</comment>
<comment type="similarity">
    <text evidence="1">Belongs to the bacterial ribosomal protein bL19 family.</text>
</comment>
<gene>
    <name evidence="1" type="primary">rplS</name>
    <name type="ordered locus">lp_1640</name>
</gene>
<organism>
    <name type="scientific">Lactiplantibacillus plantarum (strain ATCC BAA-793 / NCIMB 8826 / WCFS1)</name>
    <name type="common">Lactobacillus plantarum</name>
    <dbReference type="NCBI Taxonomy" id="220668"/>
    <lineage>
        <taxon>Bacteria</taxon>
        <taxon>Bacillati</taxon>
        <taxon>Bacillota</taxon>
        <taxon>Bacilli</taxon>
        <taxon>Lactobacillales</taxon>
        <taxon>Lactobacillaceae</taxon>
        <taxon>Lactiplantibacillus</taxon>
    </lineage>
</organism>
<evidence type="ECO:0000255" key="1">
    <source>
        <dbReference type="HAMAP-Rule" id="MF_00402"/>
    </source>
</evidence>
<evidence type="ECO:0000305" key="2"/>